<proteinExistence type="inferred from homology"/>
<comment type="function">
    <text evidence="1">Succinyl-CoA synthetase functions in the citric acid cycle (TCA), coupling the hydrolysis of succinyl-CoA to the synthesis of either ATP or GTP and thus represents the only step of substrate-level phosphorylation in the TCA. The beta subunit provides nucleotide specificity of the enzyme and binds the substrate succinate, while the binding sites for coenzyme A and phosphate are found in the alpha subunit.</text>
</comment>
<comment type="catalytic activity">
    <reaction evidence="1">
        <text>succinate + ATP + CoA = succinyl-CoA + ADP + phosphate</text>
        <dbReference type="Rhea" id="RHEA:17661"/>
        <dbReference type="ChEBI" id="CHEBI:30031"/>
        <dbReference type="ChEBI" id="CHEBI:30616"/>
        <dbReference type="ChEBI" id="CHEBI:43474"/>
        <dbReference type="ChEBI" id="CHEBI:57287"/>
        <dbReference type="ChEBI" id="CHEBI:57292"/>
        <dbReference type="ChEBI" id="CHEBI:456216"/>
        <dbReference type="EC" id="6.2.1.5"/>
    </reaction>
    <physiologicalReaction direction="right-to-left" evidence="1">
        <dbReference type="Rhea" id="RHEA:17663"/>
    </physiologicalReaction>
</comment>
<comment type="catalytic activity">
    <reaction evidence="1">
        <text>GTP + succinate + CoA = succinyl-CoA + GDP + phosphate</text>
        <dbReference type="Rhea" id="RHEA:22120"/>
        <dbReference type="ChEBI" id="CHEBI:30031"/>
        <dbReference type="ChEBI" id="CHEBI:37565"/>
        <dbReference type="ChEBI" id="CHEBI:43474"/>
        <dbReference type="ChEBI" id="CHEBI:57287"/>
        <dbReference type="ChEBI" id="CHEBI:57292"/>
        <dbReference type="ChEBI" id="CHEBI:58189"/>
    </reaction>
    <physiologicalReaction direction="right-to-left" evidence="1">
        <dbReference type="Rhea" id="RHEA:22122"/>
    </physiologicalReaction>
</comment>
<comment type="cofactor">
    <cofactor evidence="1">
        <name>Mg(2+)</name>
        <dbReference type="ChEBI" id="CHEBI:18420"/>
    </cofactor>
    <text evidence="1">Binds 1 Mg(2+) ion per subunit.</text>
</comment>
<comment type="pathway">
    <text evidence="1">Carbohydrate metabolism; tricarboxylic acid cycle; succinate from succinyl-CoA (ligase route): step 1/1.</text>
</comment>
<comment type="subunit">
    <text evidence="1">Heterotetramer of two alpha and two beta subunits.</text>
</comment>
<comment type="similarity">
    <text evidence="1">Belongs to the succinate/malate CoA ligase beta subunit family.</text>
</comment>
<feature type="chain" id="PRO_1000082264" description="Succinate--CoA ligase [ADP-forming] subunit beta">
    <location>
        <begin position="1"/>
        <end position="389"/>
    </location>
</feature>
<feature type="domain" description="ATP-grasp" evidence="1">
    <location>
        <begin position="9"/>
        <end position="244"/>
    </location>
</feature>
<feature type="binding site" evidence="1">
    <location>
        <position position="46"/>
    </location>
    <ligand>
        <name>ATP</name>
        <dbReference type="ChEBI" id="CHEBI:30616"/>
    </ligand>
</feature>
<feature type="binding site" evidence="1">
    <location>
        <begin position="53"/>
        <end position="55"/>
    </location>
    <ligand>
        <name>ATP</name>
        <dbReference type="ChEBI" id="CHEBI:30616"/>
    </ligand>
</feature>
<feature type="binding site" evidence="1">
    <location>
        <position position="102"/>
    </location>
    <ligand>
        <name>ATP</name>
        <dbReference type="ChEBI" id="CHEBI:30616"/>
    </ligand>
</feature>
<feature type="binding site" evidence="1">
    <location>
        <position position="107"/>
    </location>
    <ligand>
        <name>ATP</name>
        <dbReference type="ChEBI" id="CHEBI:30616"/>
    </ligand>
</feature>
<feature type="binding site" evidence="1">
    <location>
        <position position="199"/>
    </location>
    <ligand>
        <name>Mg(2+)</name>
        <dbReference type="ChEBI" id="CHEBI:18420"/>
    </ligand>
</feature>
<feature type="binding site" evidence="1">
    <location>
        <position position="213"/>
    </location>
    <ligand>
        <name>Mg(2+)</name>
        <dbReference type="ChEBI" id="CHEBI:18420"/>
    </ligand>
</feature>
<feature type="binding site" evidence="1">
    <location>
        <position position="264"/>
    </location>
    <ligand>
        <name>substrate</name>
        <note>ligand shared with subunit alpha</note>
    </ligand>
</feature>
<feature type="binding site" evidence="1">
    <location>
        <begin position="321"/>
        <end position="323"/>
    </location>
    <ligand>
        <name>substrate</name>
        <note>ligand shared with subunit alpha</note>
    </ligand>
</feature>
<evidence type="ECO:0000255" key="1">
    <source>
        <dbReference type="HAMAP-Rule" id="MF_00558"/>
    </source>
</evidence>
<protein>
    <recommendedName>
        <fullName evidence="1">Succinate--CoA ligase [ADP-forming] subunit beta</fullName>
        <ecNumber evidence="1">6.2.1.5</ecNumber>
    </recommendedName>
    <alternativeName>
        <fullName evidence="1">Succinyl-CoA synthetase subunit beta</fullName>
        <shortName evidence="1">SCS-beta</shortName>
    </alternativeName>
</protein>
<keyword id="KW-0067">ATP-binding</keyword>
<keyword id="KW-0436">Ligase</keyword>
<keyword id="KW-0460">Magnesium</keyword>
<keyword id="KW-0479">Metal-binding</keyword>
<keyword id="KW-0547">Nucleotide-binding</keyword>
<keyword id="KW-1185">Reference proteome</keyword>
<keyword id="KW-0816">Tricarboxylic acid cycle</keyword>
<dbReference type="EC" id="6.2.1.5" evidence="1"/>
<dbReference type="EMBL" id="AE013598">
    <property type="protein sequence ID" value="AAW74847.1"/>
    <property type="molecule type" value="Genomic_DNA"/>
</dbReference>
<dbReference type="SMR" id="Q5H2H4"/>
<dbReference type="STRING" id="291331.XOO1593"/>
<dbReference type="KEGG" id="xoo:XOO1593"/>
<dbReference type="HOGENOM" id="CLU_037430_0_2_6"/>
<dbReference type="UniPathway" id="UPA00223">
    <property type="reaction ID" value="UER00999"/>
</dbReference>
<dbReference type="Proteomes" id="UP000006735">
    <property type="component" value="Chromosome"/>
</dbReference>
<dbReference type="GO" id="GO:0042709">
    <property type="term" value="C:succinate-CoA ligase complex"/>
    <property type="evidence" value="ECO:0007669"/>
    <property type="project" value="TreeGrafter"/>
</dbReference>
<dbReference type="GO" id="GO:0005524">
    <property type="term" value="F:ATP binding"/>
    <property type="evidence" value="ECO:0007669"/>
    <property type="project" value="UniProtKB-UniRule"/>
</dbReference>
<dbReference type="GO" id="GO:0000287">
    <property type="term" value="F:magnesium ion binding"/>
    <property type="evidence" value="ECO:0007669"/>
    <property type="project" value="UniProtKB-UniRule"/>
</dbReference>
<dbReference type="GO" id="GO:0004775">
    <property type="term" value="F:succinate-CoA ligase (ADP-forming) activity"/>
    <property type="evidence" value="ECO:0007669"/>
    <property type="project" value="UniProtKB-UniRule"/>
</dbReference>
<dbReference type="GO" id="GO:0004776">
    <property type="term" value="F:succinate-CoA ligase (GDP-forming) activity"/>
    <property type="evidence" value="ECO:0007669"/>
    <property type="project" value="RHEA"/>
</dbReference>
<dbReference type="GO" id="GO:0006104">
    <property type="term" value="P:succinyl-CoA metabolic process"/>
    <property type="evidence" value="ECO:0007669"/>
    <property type="project" value="TreeGrafter"/>
</dbReference>
<dbReference type="GO" id="GO:0006099">
    <property type="term" value="P:tricarboxylic acid cycle"/>
    <property type="evidence" value="ECO:0007669"/>
    <property type="project" value="UniProtKB-UniRule"/>
</dbReference>
<dbReference type="FunFam" id="3.30.1490.20:FF:000002">
    <property type="entry name" value="Succinate--CoA ligase [ADP-forming] subunit beta"/>
    <property type="match status" value="1"/>
</dbReference>
<dbReference type="FunFam" id="3.30.470.20:FF:000002">
    <property type="entry name" value="Succinate--CoA ligase [ADP-forming] subunit beta"/>
    <property type="match status" value="1"/>
</dbReference>
<dbReference type="FunFam" id="3.40.50.261:FF:000001">
    <property type="entry name" value="Succinate--CoA ligase [ADP-forming] subunit beta"/>
    <property type="match status" value="1"/>
</dbReference>
<dbReference type="Gene3D" id="3.30.1490.20">
    <property type="entry name" value="ATP-grasp fold, A domain"/>
    <property type="match status" value="1"/>
</dbReference>
<dbReference type="Gene3D" id="3.30.470.20">
    <property type="entry name" value="ATP-grasp fold, B domain"/>
    <property type="match status" value="1"/>
</dbReference>
<dbReference type="Gene3D" id="3.40.50.261">
    <property type="entry name" value="Succinyl-CoA synthetase domains"/>
    <property type="match status" value="1"/>
</dbReference>
<dbReference type="HAMAP" id="MF_00558">
    <property type="entry name" value="Succ_CoA_beta"/>
    <property type="match status" value="1"/>
</dbReference>
<dbReference type="InterPro" id="IPR011761">
    <property type="entry name" value="ATP-grasp"/>
</dbReference>
<dbReference type="InterPro" id="IPR013650">
    <property type="entry name" value="ATP-grasp_succ-CoA_synth-type"/>
</dbReference>
<dbReference type="InterPro" id="IPR013815">
    <property type="entry name" value="ATP_grasp_subdomain_1"/>
</dbReference>
<dbReference type="InterPro" id="IPR017866">
    <property type="entry name" value="Succ-CoA_synthase_bsu_CS"/>
</dbReference>
<dbReference type="InterPro" id="IPR005811">
    <property type="entry name" value="SUCC_ACL_C"/>
</dbReference>
<dbReference type="InterPro" id="IPR005809">
    <property type="entry name" value="Succ_CoA_ligase-like_bsu"/>
</dbReference>
<dbReference type="InterPro" id="IPR016102">
    <property type="entry name" value="Succinyl-CoA_synth-like"/>
</dbReference>
<dbReference type="NCBIfam" id="NF001913">
    <property type="entry name" value="PRK00696.1"/>
    <property type="match status" value="1"/>
</dbReference>
<dbReference type="NCBIfam" id="TIGR01016">
    <property type="entry name" value="sucCoAbeta"/>
    <property type="match status" value="1"/>
</dbReference>
<dbReference type="PANTHER" id="PTHR11815:SF10">
    <property type="entry name" value="SUCCINATE--COA LIGASE [GDP-FORMING] SUBUNIT BETA, MITOCHONDRIAL"/>
    <property type="match status" value="1"/>
</dbReference>
<dbReference type="PANTHER" id="PTHR11815">
    <property type="entry name" value="SUCCINYL-COA SYNTHETASE BETA CHAIN"/>
    <property type="match status" value="1"/>
</dbReference>
<dbReference type="Pfam" id="PF08442">
    <property type="entry name" value="ATP-grasp_2"/>
    <property type="match status" value="1"/>
</dbReference>
<dbReference type="Pfam" id="PF00549">
    <property type="entry name" value="Ligase_CoA"/>
    <property type="match status" value="1"/>
</dbReference>
<dbReference type="PIRSF" id="PIRSF001554">
    <property type="entry name" value="SucCS_beta"/>
    <property type="match status" value="1"/>
</dbReference>
<dbReference type="SUPFAM" id="SSF56059">
    <property type="entry name" value="Glutathione synthetase ATP-binding domain-like"/>
    <property type="match status" value="1"/>
</dbReference>
<dbReference type="SUPFAM" id="SSF52210">
    <property type="entry name" value="Succinyl-CoA synthetase domains"/>
    <property type="match status" value="1"/>
</dbReference>
<dbReference type="PROSITE" id="PS50975">
    <property type="entry name" value="ATP_GRASP"/>
    <property type="match status" value="1"/>
</dbReference>
<dbReference type="PROSITE" id="PS01217">
    <property type="entry name" value="SUCCINYL_COA_LIG_3"/>
    <property type="match status" value="1"/>
</dbReference>
<sequence length="389" mass="41400">MNFHEYQSKQLLAEYGIPVPSGKVAATPDEAVDVATSLGKGPWMVKAQIHAGGRGKAGGVKFCKTTDDVKAAAAKMLGTKMSTYQTAGVELPINLVLVTTAGEIVKELYLSILVDRGTKTITYIASSEGGVEIEQVAAETPELIHALNVDFVEGVQGYHGRDFGFKLGLNAKQAGQFASIMVNLYKLFNEKDLALVEINPLAILDDGNLYALDGKFDSDDNAAFRQKQLVAMRDKTQEDETEVTASELDINYVTMDGNIGCMVNGAGLAMATMDVIKLNGGEPANFLDVGGGANKQRVIEAFKLILSSDKVEGIFVNIFGGIVRCDMIAEGIIAAVKEVGVKVPVVVRLEGTNVEEGKQLLRDSGMAIIPADNINDGAKKVVEAVKNAA</sequence>
<organism>
    <name type="scientific">Xanthomonas oryzae pv. oryzae (strain KACC10331 / KXO85)</name>
    <dbReference type="NCBI Taxonomy" id="291331"/>
    <lineage>
        <taxon>Bacteria</taxon>
        <taxon>Pseudomonadati</taxon>
        <taxon>Pseudomonadota</taxon>
        <taxon>Gammaproteobacteria</taxon>
        <taxon>Lysobacterales</taxon>
        <taxon>Lysobacteraceae</taxon>
        <taxon>Xanthomonas</taxon>
    </lineage>
</organism>
<gene>
    <name evidence="1" type="primary">sucC</name>
    <name type="ordered locus">XOO1593</name>
</gene>
<accession>Q5H2H4</accession>
<name>SUCC_XANOR</name>
<reference key="1">
    <citation type="journal article" date="2005" name="Nucleic Acids Res.">
        <title>The genome sequence of Xanthomonas oryzae pathovar oryzae KACC10331, the bacterial blight pathogen of rice.</title>
        <authorList>
            <person name="Lee B.-M."/>
            <person name="Park Y.-J."/>
            <person name="Park D.-S."/>
            <person name="Kang H.-W."/>
            <person name="Kim J.-G."/>
            <person name="Song E.-S."/>
            <person name="Park I.-C."/>
            <person name="Yoon U.-H."/>
            <person name="Hahn J.-H."/>
            <person name="Koo B.-S."/>
            <person name="Lee G.-B."/>
            <person name="Kim H."/>
            <person name="Park H.-S."/>
            <person name="Yoon K.-O."/>
            <person name="Kim J.-H."/>
            <person name="Jung C.-H."/>
            <person name="Koh N.-H."/>
            <person name="Seo J.-S."/>
            <person name="Go S.-J."/>
        </authorList>
    </citation>
    <scope>NUCLEOTIDE SEQUENCE [LARGE SCALE GENOMIC DNA]</scope>
    <source>
        <strain>KACC10331 / KXO85</strain>
    </source>
</reference>